<sequence>MHFISCCLRRSTVSIAVSRSLLVKRLFCSGWPGDDTIYSLSSGQGKCGVAVVRVSGPASALAVRRLTRSLPAPRTASLRSISHPQSKELLDRGLVLWFPGPASFTGEDSAEFHIHGGPAVISGVLQALGSLPGLRPAEAGEFTRRAFYAGKLDLTEVEGLSDLIHAETEAQRRQALRQMAGDLGRIYQDWTDQLKRCLAHVEAFIDFSEDELIEDGVLNDVDRAVQQLQTDMENHLSDERRGERLRSGVHVVIAGSTNAGKSSLLNLLTQRPAAIVSPTAGTTRDVLEVPLDIGGYPVLLSDTAGLRDTSDSVEQEGVRRARQRVEQADLSLVVVDLTQLPSERRHVPVFLRGHLKNILERSSQQQQHILILNESDLVSAEQQRSIQTSLQELSGAPSACFLSCHSRDGLEELLTLLHNTLKTLCGDPLIGSPTLTQTRHRTHLQKSIEALQQYHEYRDVDLALAAEGLRLGLLSLGRITGRVSPEEILDVIFRDFCIGK</sequence>
<protein>
    <recommendedName>
        <fullName evidence="2">5-taurinomethyluridine-[tRNA] synthase subunit GTPB3, mitochondrial</fullName>
        <ecNumber evidence="2">3.6.1.-</ecNumber>
    </recommendedName>
    <alternativeName>
        <fullName>GTP-binding protein 3</fullName>
    </alternativeName>
    <alternativeName>
        <fullName>tRNA modification GTPase GTPBP3, mitochondrial</fullName>
    </alternativeName>
</protein>
<gene>
    <name type="primary">gtpbp3</name>
    <name type="ORF">zgc:112394</name>
</gene>
<accession>Q501Z5</accession>
<evidence type="ECO:0000250" key="1">
    <source>
        <dbReference type="UniProtKB" id="P25522"/>
    </source>
</evidence>
<evidence type="ECO:0000250" key="2">
    <source>
        <dbReference type="UniProtKB" id="Q969Y2"/>
    </source>
</evidence>
<evidence type="ECO:0000255" key="3"/>
<evidence type="ECO:0000255" key="4">
    <source>
        <dbReference type="PROSITE-ProRule" id="PRU01046"/>
    </source>
</evidence>
<evidence type="ECO:0000305" key="5"/>
<dbReference type="EC" id="3.6.1.-" evidence="2"/>
<dbReference type="EMBL" id="BC095801">
    <property type="protein sequence ID" value="AAH95801.1"/>
    <property type="molecule type" value="mRNA"/>
</dbReference>
<dbReference type="RefSeq" id="NP_001018605.1">
    <property type="nucleotide sequence ID" value="NM_001020769.1"/>
</dbReference>
<dbReference type="SMR" id="Q501Z5"/>
<dbReference type="FunCoup" id="Q501Z5">
    <property type="interactions" value="1219"/>
</dbReference>
<dbReference type="STRING" id="7955.ENSDARP00000004190"/>
<dbReference type="PaxDb" id="7955-ENSDARP00000004190"/>
<dbReference type="GeneID" id="553807"/>
<dbReference type="KEGG" id="dre:553807"/>
<dbReference type="AGR" id="ZFIN:ZDB-GENE-050522-335"/>
<dbReference type="CTD" id="84705"/>
<dbReference type="ZFIN" id="ZDB-GENE-050522-335">
    <property type="gene designation" value="gtpbp3"/>
</dbReference>
<dbReference type="eggNOG" id="KOG1191">
    <property type="taxonomic scope" value="Eukaryota"/>
</dbReference>
<dbReference type="InParanoid" id="Q501Z5"/>
<dbReference type="OrthoDB" id="188276at2759"/>
<dbReference type="PhylomeDB" id="Q501Z5"/>
<dbReference type="ChiTaRS" id="gtpbp3">
    <property type="organism name" value="zebrafish"/>
</dbReference>
<dbReference type="PRO" id="PR:Q501Z5"/>
<dbReference type="Proteomes" id="UP000000437">
    <property type="component" value="Alternate scaffold 11"/>
</dbReference>
<dbReference type="Proteomes" id="UP000000437">
    <property type="component" value="Chromosome 11"/>
</dbReference>
<dbReference type="GO" id="GO:0005737">
    <property type="term" value="C:cytoplasm"/>
    <property type="evidence" value="ECO:0000318"/>
    <property type="project" value="GO_Central"/>
</dbReference>
<dbReference type="GO" id="GO:0005739">
    <property type="term" value="C:mitochondrion"/>
    <property type="evidence" value="ECO:0000314"/>
    <property type="project" value="ZFIN"/>
</dbReference>
<dbReference type="GO" id="GO:0005525">
    <property type="term" value="F:GTP binding"/>
    <property type="evidence" value="ECO:0007669"/>
    <property type="project" value="UniProtKB-KW"/>
</dbReference>
<dbReference type="GO" id="GO:0003924">
    <property type="term" value="F:GTPase activity"/>
    <property type="evidence" value="ECO:0000250"/>
    <property type="project" value="UniProtKB"/>
</dbReference>
<dbReference type="GO" id="GO:0160236">
    <property type="term" value="F:tRNA 5-taurinomethyluridine synthase activity"/>
    <property type="evidence" value="ECO:0000250"/>
    <property type="project" value="UniProtKB"/>
</dbReference>
<dbReference type="GO" id="GO:0048568">
    <property type="term" value="P:embryonic organ development"/>
    <property type="evidence" value="ECO:0000315"/>
    <property type="project" value="ZFIN"/>
</dbReference>
<dbReference type="GO" id="GO:0070143">
    <property type="term" value="P:mitochondrial alanyl-tRNA aminoacylation"/>
    <property type="evidence" value="ECO:0000315"/>
    <property type="project" value="ZFIN"/>
</dbReference>
<dbReference type="GO" id="GO:0070153">
    <property type="term" value="P:mitochondrial leucyl-tRNA aminoacylation"/>
    <property type="evidence" value="ECO:0000315"/>
    <property type="project" value="ZFIN"/>
</dbReference>
<dbReference type="GO" id="GO:0070154">
    <property type="term" value="P:mitochondrial lysyl-tRNA aminoacylation"/>
    <property type="evidence" value="ECO:0000315"/>
    <property type="project" value="ZFIN"/>
</dbReference>
<dbReference type="GO" id="GO:0070155">
    <property type="term" value="P:mitochondrial methionyl-tRNA aminoacylation"/>
    <property type="evidence" value="ECO:0000315"/>
    <property type="project" value="ZFIN"/>
</dbReference>
<dbReference type="GO" id="GO:0070900">
    <property type="term" value="P:mitochondrial tRNA modification"/>
    <property type="evidence" value="ECO:0000315"/>
    <property type="project" value="ZFIN"/>
</dbReference>
<dbReference type="GO" id="GO:0070899">
    <property type="term" value="P:mitochondrial tRNA wobble uridine modification"/>
    <property type="evidence" value="ECO:0000250"/>
    <property type="project" value="UniProtKB"/>
</dbReference>
<dbReference type="GO" id="GO:0070183">
    <property type="term" value="P:mitochondrial tryptophanyl-tRNA aminoacylation"/>
    <property type="evidence" value="ECO:0000315"/>
    <property type="project" value="ZFIN"/>
</dbReference>
<dbReference type="GO" id="GO:0070184">
    <property type="term" value="P:mitochondrial tyrosyl-tRNA aminoacylation"/>
    <property type="evidence" value="ECO:0000315"/>
    <property type="project" value="ZFIN"/>
</dbReference>
<dbReference type="GO" id="GO:0031647">
    <property type="term" value="P:regulation of protein stability"/>
    <property type="evidence" value="ECO:0000315"/>
    <property type="project" value="ZFIN"/>
</dbReference>
<dbReference type="GO" id="GO:0030488">
    <property type="term" value="P:tRNA methylation"/>
    <property type="evidence" value="ECO:0000318"/>
    <property type="project" value="GO_Central"/>
</dbReference>
<dbReference type="GO" id="GO:0036416">
    <property type="term" value="P:tRNA stabilization"/>
    <property type="evidence" value="ECO:0000315"/>
    <property type="project" value="ZFIN"/>
</dbReference>
<dbReference type="GO" id="GO:0002098">
    <property type="term" value="P:tRNA wobble uridine modification"/>
    <property type="evidence" value="ECO:0000318"/>
    <property type="project" value="GO_Central"/>
</dbReference>
<dbReference type="CDD" id="cd04164">
    <property type="entry name" value="trmE"/>
    <property type="match status" value="1"/>
</dbReference>
<dbReference type="CDD" id="cd14858">
    <property type="entry name" value="TrmE_N"/>
    <property type="match status" value="1"/>
</dbReference>
<dbReference type="FunFam" id="3.30.1360.120:FF:000007">
    <property type="entry name" value="tRNA modification GTPase GTPBP3, mitochondrial"/>
    <property type="match status" value="1"/>
</dbReference>
<dbReference type="FunFam" id="3.40.50.300:FF:000924">
    <property type="entry name" value="tRNA modification GTPase GTPBP3, mitochondrial"/>
    <property type="match status" value="1"/>
</dbReference>
<dbReference type="Gene3D" id="3.40.50.300">
    <property type="entry name" value="P-loop containing nucleotide triphosphate hydrolases"/>
    <property type="match status" value="1"/>
</dbReference>
<dbReference type="Gene3D" id="3.30.1360.120">
    <property type="entry name" value="Probable tRNA modification gtpase trme, domain 1"/>
    <property type="match status" value="1"/>
</dbReference>
<dbReference type="Gene3D" id="1.20.120.430">
    <property type="entry name" value="tRNA modification GTPase MnmE domain 2"/>
    <property type="match status" value="1"/>
</dbReference>
<dbReference type="HAMAP" id="MF_00379">
    <property type="entry name" value="GTPase_MnmE"/>
    <property type="match status" value="1"/>
</dbReference>
<dbReference type="InterPro" id="IPR031168">
    <property type="entry name" value="G_TrmE"/>
</dbReference>
<dbReference type="InterPro" id="IPR006073">
    <property type="entry name" value="GTP-bd"/>
</dbReference>
<dbReference type="InterPro" id="IPR018948">
    <property type="entry name" value="GTP-bd_TrmE_N"/>
</dbReference>
<dbReference type="InterPro" id="IPR004520">
    <property type="entry name" value="GTPase_MnmE"/>
</dbReference>
<dbReference type="InterPro" id="IPR027368">
    <property type="entry name" value="MnmE_dom2"/>
</dbReference>
<dbReference type="InterPro" id="IPR025867">
    <property type="entry name" value="MnmE_helical"/>
</dbReference>
<dbReference type="InterPro" id="IPR027417">
    <property type="entry name" value="P-loop_NTPase"/>
</dbReference>
<dbReference type="InterPro" id="IPR005225">
    <property type="entry name" value="Small_GTP-bd"/>
</dbReference>
<dbReference type="InterPro" id="IPR027266">
    <property type="entry name" value="TrmE/GcvT_dom1"/>
</dbReference>
<dbReference type="NCBIfam" id="TIGR00450">
    <property type="entry name" value="mnmE_trmE_thdF"/>
    <property type="match status" value="1"/>
</dbReference>
<dbReference type="NCBIfam" id="NF003661">
    <property type="entry name" value="PRK05291.1-3"/>
    <property type="match status" value="1"/>
</dbReference>
<dbReference type="NCBIfam" id="TIGR00231">
    <property type="entry name" value="small_GTP"/>
    <property type="match status" value="1"/>
</dbReference>
<dbReference type="PANTHER" id="PTHR42714">
    <property type="entry name" value="TRNA MODIFICATION GTPASE GTPBP3"/>
    <property type="match status" value="1"/>
</dbReference>
<dbReference type="PANTHER" id="PTHR42714:SF2">
    <property type="entry name" value="TRNA MODIFICATION GTPASE GTPBP3, MITOCHONDRIAL"/>
    <property type="match status" value="1"/>
</dbReference>
<dbReference type="Pfam" id="PF01926">
    <property type="entry name" value="MMR_HSR1"/>
    <property type="match status" value="1"/>
</dbReference>
<dbReference type="Pfam" id="PF12631">
    <property type="entry name" value="MnmE_helical"/>
    <property type="match status" value="1"/>
</dbReference>
<dbReference type="Pfam" id="PF10396">
    <property type="entry name" value="TrmE_N"/>
    <property type="match status" value="1"/>
</dbReference>
<dbReference type="SUPFAM" id="SSF52540">
    <property type="entry name" value="P-loop containing nucleoside triphosphate hydrolases"/>
    <property type="match status" value="1"/>
</dbReference>
<dbReference type="SUPFAM" id="SSF116878">
    <property type="entry name" value="TrmE connector domain"/>
    <property type="match status" value="1"/>
</dbReference>
<dbReference type="PROSITE" id="PS51709">
    <property type="entry name" value="G_TRME"/>
    <property type="match status" value="1"/>
</dbReference>
<proteinExistence type="evidence at transcript level"/>
<organism>
    <name type="scientific">Danio rerio</name>
    <name type="common">Zebrafish</name>
    <name type="synonym">Brachydanio rerio</name>
    <dbReference type="NCBI Taxonomy" id="7955"/>
    <lineage>
        <taxon>Eukaryota</taxon>
        <taxon>Metazoa</taxon>
        <taxon>Chordata</taxon>
        <taxon>Craniata</taxon>
        <taxon>Vertebrata</taxon>
        <taxon>Euteleostomi</taxon>
        <taxon>Actinopterygii</taxon>
        <taxon>Neopterygii</taxon>
        <taxon>Teleostei</taxon>
        <taxon>Ostariophysi</taxon>
        <taxon>Cypriniformes</taxon>
        <taxon>Danionidae</taxon>
        <taxon>Danioninae</taxon>
        <taxon>Danio</taxon>
    </lineage>
</organism>
<reference key="1">
    <citation type="submission" date="2005-05" db="EMBL/GenBank/DDBJ databases">
        <authorList>
            <consortium name="NIH - Zebrafish Gene Collection (ZGC) project"/>
        </authorList>
    </citation>
    <scope>NUCLEOTIDE SEQUENCE [LARGE SCALE MRNA]</scope>
    <source>
        <tissue>Ovary</tissue>
    </source>
</reference>
<name>GTPB3_DANRE</name>
<feature type="transit peptide" description="Mitochondrion" evidence="3">
    <location>
        <begin position="1"/>
        <end position="73"/>
    </location>
</feature>
<feature type="chain" id="PRO_0000280268" description="5-taurinomethyluridine-[tRNA] synthase subunit GTPB3, mitochondrial">
    <location>
        <begin position="74"/>
        <end position="500"/>
    </location>
</feature>
<feature type="domain" description="TrmE-type G">
    <location>
        <begin position="248"/>
        <end position="422"/>
    </location>
</feature>
<feature type="binding site" evidence="2">
    <location>
        <position position="53"/>
    </location>
    <ligand>
        <name>5,10-methylenetetrahydrofolate</name>
        <dbReference type="ChEBI" id="CHEBI:12071"/>
    </ligand>
</feature>
<feature type="binding site" evidence="2">
    <location>
        <position position="111"/>
    </location>
    <ligand>
        <name>5,10-methylenetetrahydrofolate</name>
        <dbReference type="ChEBI" id="CHEBI:12071"/>
    </ligand>
</feature>
<feature type="binding site" evidence="2">
    <location>
        <position position="151"/>
    </location>
    <ligand>
        <name>5,10-methylenetetrahydrofolate</name>
        <dbReference type="ChEBI" id="CHEBI:12071"/>
    </ligand>
</feature>
<feature type="binding site" evidence="4">
    <location>
        <begin position="255"/>
        <end position="262"/>
    </location>
    <ligand>
        <name>GTP</name>
        <dbReference type="ChEBI" id="CHEBI:37565"/>
    </ligand>
</feature>
<feature type="binding site" evidence="1">
    <location>
        <position position="258"/>
    </location>
    <ligand>
        <name>K(+)</name>
        <dbReference type="ChEBI" id="CHEBI:29103"/>
    </ligand>
</feature>
<feature type="binding site" evidence="4">
    <location>
        <position position="262"/>
    </location>
    <ligand>
        <name>Mg(2+)</name>
        <dbReference type="ChEBI" id="CHEBI:18420"/>
    </ligand>
</feature>
<feature type="binding site" evidence="4">
    <location>
        <begin position="281"/>
        <end position="285"/>
    </location>
    <ligand>
        <name>GTP</name>
        <dbReference type="ChEBI" id="CHEBI:37565"/>
    </ligand>
</feature>
<feature type="binding site" evidence="4">
    <location>
        <position position="283"/>
    </location>
    <ligand>
        <name>Mg(2+)</name>
        <dbReference type="ChEBI" id="CHEBI:18420"/>
    </ligand>
</feature>
<feature type="binding site" evidence="4">
    <location>
        <begin position="302"/>
        <end position="305"/>
    </location>
    <ligand>
        <name>GTP</name>
        <dbReference type="ChEBI" id="CHEBI:37565"/>
    </ligand>
</feature>
<feature type="binding site" evidence="4">
    <location>
        <begin position="373"/>
        <end position="376"/>
    </location>
    <ligand>
        <name>GTP</name>
        <dbReference type="ChEBI" id="CHEBI:37565"/>
    </ligand>
</feature>
<feature type="binding site" evidence="2">
    <location>
        <position position="500"/>
    </location>
    <ligand>
        <name>5,10-methylenetetrahydrofolate</name>
        <dbReference type="ChEBI" id="CHEBI:12071"/>
    </ligand>
</feature>
<comment type="function">
    <text evidence="2">GTPase component of the GTPBP3-MTO1 complex that catalyzes the 5-taurinomethyluridine (taum(5)U) modification at the 34th wobble position (U34) of mitochondrial tRNAs (mt-tRNAs), which plays a role in mt-tRNA decoding and mitochondrial translation. Taum(5)U formation on mammalian mt-tRNA requires the presence of both GTPBP3-mediated GTPase activity and MTO1 catalytic activity.</text>
</comment>
<comment type="catalytic activity">
    <reaction evidence="2">
        <text>GTP + H2O = GDP + phosphate + H(+)</text>
        <dbReference type="Rhea" id="RHEA:19669"/>
        <dbReference type="ChEBI" id="CHEBI:15377"/>
        <dbReference type="ChEBI" id="CHEBI:15378"/>
        <dbReference type="ChEBI" id="CHEBI:37565"/>
        <dbReference type="ChEBI" id="CHEBI:43474"/>
        <dbReference type="ChEBI" id="CHEBI:58189"/>
    </reaction>
    <physiologicalReaction direction="left-to-right" evidence="2">
        <dbReference type="Rhea" id="RHEA:19670"/>
    </physiologicalReaction>
</comment>
<comment type="cofactor">
    <cofactor evidence="2">
        <name>K(+)</name>
        <dbReference type="ChEBI" id="CHEBI:29103"/>
    </cofactor>
    <text evidence="2">Forms a homodimer in the presence of potassium.</text>
</comment>
<comment type="subcellular location">
    <subcellularLocation>
        <location evidence="2">Mitochondrion</location>
    </subcellularLocation>
</comment>
<comment type="similarity">
    <text evidence="5">Belongs to the TRAFAC class TrmE-Era-EngA-EngB-Septin-like GTPase superfamily. TrmE GTPase family.</text>
</comment>
<keyword id="KW-0342">GTP-binding</keyword>
<keyword id="KW-0378">Hydrolase</keyword>
<keyword id="KW-0460">Magnesium</keyword>
<keyword id="KW-0479">Metal-binding</keyword>
<keyword id="KW-0496">Mitochondrion</keyword>
<keyword id="KW-0547">Nucleotide-binding</keyword>
<keyword id="KW-0630">Potassium</keyword>
<keyword id="KW-1185">Reference proteome</keyword>
<keyword id="KW-0809">Transit peptide</keyword>
<keyword id="KW-0819">tRNA processing</keyword>